<gene>
    <name type="ORF">CTHT_0041430</name>
    <name type="ORF">CTHT_0041430-2</name>
</gene>
<reference key="1">
    <citation type="journal article" date="2011" name="Cell">
        <title>Insight into structure and assembly of the nuclear pore complex by utilizing the genome of a eukaryotic thermophile.</title>
        <authorList>
            <person name="Amlacher S."/>
            <person name="Sarges P."/>
            <person name="Flemming D."/>
            <person name="van Noort V."/>
            <person name="Kunze R."/>
            <person name="Devos D.P."/>
            <person name="Arumugam M."/>
            <person name="Bork P."/>
            <person name="Hurt E."/>
        </authorList>
    </citation>
    <scope>NUCLEOTIDE SEQUENCE [LARGE SCALE GENOMIC DNA]</scope>
    <source>
        <strain>DSM 1495 / CBS 144.50 / IMI 039719</strain>
    </source>
</reference>
<name>CAPZA_CHATD</name>
<proteinExistence type="inferred from homology"/>
<organism>
    <name type="scientific">Chaetomium thermophilum (strain DSM 1495 / CBS 144.50 / IMI 039719)</name>
    <name type="common">Thermochaetoides thermophila</name>
    <dbReference type="NCBI Taxonomy" id="759272"/>
    <lineage>
        <taxon>Eukaryota</taxon>
        <taxon>Fungi</taxon>
        <taxon>Dikarya</taxon>
        <taxon>Ascomycota</taxon>
        <taxon>Pezizomycotina</taxon>
        <taxon>Sordariomycetes</taxon>
        <taxon>Sordariomycetidae</taxon>
        <taxon>Sordariales</taxon>
        <taxon>Chaetomiaceae</taxon>
        <taxon>Thermochaetoides</taxon>
    </lineage>
</organism>
<keyword id="KW-0117">Actin capping</keyword>
<keyword id="KW-0009">Actin-binding</keyword>
<keyword id="KW-0963">Cytoplasm</keyword>
<keyword id="KW-1185">Reference proteome</keyword>
<sequence>MTLQSQKAILSSFIEGAPPGELADVVADIKNLTSSTPNLINELGPAFQKYNEEQFTTVKLPGSSQHVIISSHNSLGGSRYYDVETSTSFAFDHTTQKASAVETYVVEGAQGDLTKSVIKALAPYVKEHYSNAAYGAWPIENDSKVAIIIVANKYSPNNYWNGRWRSLYILDPAAGTVEGSIKVDVHYYEDGNVRLLTDKPVTASVSATGAAIVKEISAVEKKYQEELNRSFASLSEGAFKALRRQLPVTRQKIEWEKIAGYRLGQDIGGGGARR</sequence>
<comment type="function">
    <text evidence="1">F-actin-capping proteins bind in a Ca(2+)-independent manner to the fast growing ends of actin filaments (barbed end) thereby blocking the exchange of subunits at these ends. Unlike other capping proteins (such as gelsolin and severin), these proteins do not sever actin filaments.</text>
</comment>
<comment type="subunit">
    <text evidence="1">Heterodimer of an alpha and a beta subunit.</text>
</comment>
<comment type="subcellular location">
    <subcellularLocation>
        <location evidence="1">Cytoplasm</location>
    </subcellularLocation>
</comment>
<comment type="similarity">
    <text evidence="2">Belongs to the F-actin-capping protein alpha subunit family.</text>
</comment>
<comment type="sequence caution" evidence="2">
    <conflict type="erroneous gene model prediction">
        <sequence resource="EMBL-CDS" id="EGS19664"/>
    </conflict>
    <text>The predicted gene CTHT_0041430 has been split into 2 genes: CTHT_0041430-1 and CTHT_0041430-2.</text>
</comment>
<protein>
    <recommendedName>
        <fullName evidence="1">F-actin-capping protein subunit alpha</fullName>
    </recommendedName>
</protein>
<dbReference type="EMBL" id="GL988043">
    <property type="protein sequence ID" value="EGS19664.1"/>
    <property type="status" value="ALT_SEQ"/>
    <property type="molecule type" value="Genomic_DNA"/>
</dbReference>
<dbReference type="SMR" id="P9WF01"/>
<dbReference type="OrthoDB" id="878at2759"/>
<dbReference type="Proteomes" id="UP000008066">
    <property type="component" value="Unassembled WGS sequence"/>
</dbReference>
<dbReference type="GO" id="GO:0030479">
    <property type="term" value="C:actin cortical patch"/>
    <property type="evidence" value="ECO:0007669"/>
    <property type="project" value="TreeGrafter"/>
</dbReference>
<dbReference type="GO" id="GO:0008290">
    <property type="term" value="C:F-actin capping protein complex"/>
    <property type="evidence" value="ECO:0007669"/>
    <property type="project" value="InterPro"/>
</dbReference>
<dbReference type="GO" id="GO:0051015">
    <property type="term" value="F:actin filament binding"/>
    <property type="evidence" value="ECO:0007669"/>
    <property type="project" value="TreeGrafter"/>
</dbReference>
<dbReference type="GO" id="GO:0030036">
    <property type="term" value="P:actin cytoskeleton organization"/>
    <property type="evidence" value="ECO:0007669"/>
    <property type="project" value="TreeGrafter"/>
</dbReference>
<dbReference type="GO" id="GO:0051016">
    <property type="term" value="P:barbed-end actin filament capping"/>
    <property type="evidence" value="ECO:0007669"/>
    <property type="project" value="InterPro"/>
</dbReference>
<dbReference type="FunFam" id="3.30.1140.60:FF:000004">
    <property type="entry name" value="F-actin-capping protein subunit alpha"/>
    <property type="match status" value="1"/>
</dbReference>
<dbReference type="FunFam" id="3.90.1150.210:FF:000003">
    <property type="entry name" value="F-actin-capping protein subunit alpha"/>
    <property type="match status" value="1"/>
</dbReference>
<dbReference type="Gene3D" id="3.30.1140.60">
    <property type="entry name" value="F-actin capping protein, alpha subunit"/>
    <property type="match status" value="1"/>
</dbReference>
<dbReference type="Gene3D" id="3.90.1150.210">
    <property type="entry name" value="F-actin capping protein, beta subunit"/>
    <property type="match status" value="1"/>
</dbReference>
<dbReference type="InterPro" id="IPR002189">
    <property type="entry name" value="CapZ_alpha"/>
</dbReference>
<dbReference type="InterPro" id="IPR037282">
    <property type="entry name" value="CapZ_alpha/beta"/>
</dbReference>
<dbReference type="InterPro" id="IPR042276">
    <property type="entry name" value="CapZ_alpha/beta_2"/>
</dbReference>
<dbReference type="InterPro" id="IPR042489">
    <property type="entry name" value="CapZ_alpha_1"/>
</dbReference>
<dbReference type="InterPro" id="IPR017865">
    <property type="entry name" value="F-actin_cap_asu_CS"/>
</dbReference>
<dbReference type="PANTHER" id="PTHR10653">
    <property type="entry name" value="F-ACTIN-CAPPING PROTEIN SUBUNIT ALPHA"/>
    <property type="match status" value="1"/>
</dbReference>
<dbReference type="PANTHER" id="PTHR10653:SF0">
    <property type="entry name" value="F-ACTIN-CAPPING PROTEIN SUBUNIT ALPHA"/>
    <property type="match status" value="1"/>
</dbReference>
<dbReference type="Pfam" id="PF01267">
    <property type="entry name" value="F-actin_cap_A"/>
    <property type="match status" value="1"/>
</dbReference>
<dbReference type="PRINTS" id="PR00191">
    <property type="entry name" value="FACTINCAPA"/>
</dbReference>
<dbReference type="SUPFAM" id="SSF90096">
    <property type="entry name" value="Subunits of heterodimeric actin filament capping protein Capz"/>
    <property type="match status" value="1"/>
</dbReference>
<dbReference type="PROSITE" id="PS00748">
    <property type="entry name" value="F_ACTIN_CAPPING_A_1"/>
    <property type="match status" value="1"/>
</dbReference>
<dbReference type="PROSITE" id="PS00749">
    <property type="entry name" value="F_ACTIN_CAPPING_A_2"/>
    <property type="match status" value="1"/>
</dbReference>
<accession>P9WF01</accession>
<accession>G0SA92</accession>
<feature type="chain" id="PRO_0000450357" description="F-actin-capping protein subunit alpha">
    <location>
        <begin position="1"/>
        <end position="274"/>
    </location>
</feature>
<evidence type="ECO:0000250" key="1">
    <source>
        <dbReference type="UniProtKB" id="Q10434"/>
    </source>
</evidence>
<evidence type="ECO:0000305" key="2"/>